<gene>
    <name evidence="1" type="primary">fdhD</name>
    <name type="ordered locus">YPTB3926</name>
</gene>
<dbReference type="EMBL" id="BX936398">
    <property type="protein sequence ID" value="CAH23164.1"/>
    <property type="molecule type" value="Genomic_DNA"/>
</dbReference>
<dbReference type="RefSeq" id="WP_011193341.1">
    <property type="nucleotide sequence ID" value="NC_006155.1"/>
</dbReference>
<dbReference type="SMR" id="Q663U8"/>
<dbReference type="KEGG" id="ypo:BZ17_2654"/>
<dbReference type="KEGG" id="yps:YPTB3926"/>
<dbReference type="PATRIC" id="fig|273123.14.peg.2781"/>
<dbReference type="Proteomes" id="UP000001011">
    <property type="component" value="Chromosome"/>
</dbReference>
<dbReference type="GO" id="GO:0005737">
    <property type="term" value="C:cytoplasm"/>
    <property type="evidence" value="ECO:0007669"/>
    <property type="project" value="UniProtKB-SubCell"/>
</dbReference>
<dbReference type="GO" id="GO:0097163">
    <property type="term" value="F:sulfur carrier activity"/>
    <property type="evidence" value="ECO:0007669"/>
    <property type="project" value="UniProtKB-UniRule"/>
</dbReference>
<dbReference type="GO" id="GO:0016783">
    <property type="term" value="F:sulfurtransferase activity"/>
    <property type="evidence" value="ECO:0007669"/>
    <property type="project" value="InterPro"/>
</dbReference>
<dbReference type="GO" id="GO:0006777">
    <property type="term" value="P:Mo-molybdopterin cofactor biosynthetic process"/>
    <property type="evidence" value="ECO:0007669"/>
    <property type="project" value="UniProtKB-UniRule"/>
</dbReference>
<dbReference type="Gene3D" id="3.10.20.10">
    <property type="match status" value="1"/>
</dbReference>
<dbReference type="Gene3D" id="3.40.140.10">
    <property type="entry name" value="Cytidine Deaminase, domain 2"/>
    <property type="match status" value="1"/>
</dbReference>
<dbReference type="HAMAP" id="MF_00187">
    <property type="entry name" value="FdhD"/>
    <property type="match status" value="1"/>
</dbReference>
<dbReference type="InterPro" id="IPR016193">
    <property type="entry name" value="Cytidine_deaminase-like"/>
</dbReference>
<dbReference type="InterPro" id="IPR003786">
    <property type="entry name" value="FdhD"/>
</dbReference>
<dbReference type="NCBIfam" id="TIGR00129">
    <property type="entry name" value="fdhD_narQ"/>
    <property type="match status" value="1"/>
</dbReference>
<dbReference type="PANTHER" id="PTHR30592">
    <property type="entry name" value="FORMATE DEHYDROGENASE"/>
    <property type="match status" value="1"/>
</dbReference>
<dbReference type="PANTHER" id="PTHR30592:SF1">
    <property type="entry name" value="SULFUR CARRIER PROTEIN FDHD"/>
    <property type="match status" value="1"/>
</dbReference>
<dbReference type="Pfam" id="PF02634">
    <property type="entry name" value="FdhD-NarQ"/>
    <property type="match status" value="1"/>
</dbReference>
<dbReference type="PIRSF" id="PIRSF015626">
    <property type="entry name" value="FdhD"/>
    <property type="match status" value="1"/>
</dbReference>
<dbReference type="SUPFAM" id="SSF53927">
    <property type="entry name" value="Cytidine deaminase-like"/>
    <property type="match status" value="1"/>
</dbReference>
<reference key="1">
    <citation type="journal article" date="2004" name="Proc. Natl. Acad. Sci. U.S.A.">
        <title>Insights into the evolution of Yersinia pestis through whole-genome comparison with Yersinia pseudotuberculosis.</title>
        <authorList>
            <person name="Chain P.S.G."/>
            <person name="Carniel E."/>
            <person name="Larimer F.W."/>
            <person name="Lamerdin J."/>
            <person name="Stoutland P.O."/>
            <person name="Regala W.M."/>
            <person name="Georgescu A.M."/>
            <person name="Vergez L.M."/>
            <person name="Land M.L."/>
            <person name="Motin V.L."/>
            <person name="Brubaker R.R."/>
            <person name="Fowler J."/>
            <person name="Hinnebusch J."/>
            <person name="Marceau M."/>
            <person name="Medigue C."/>
            <person name="Simonet M."/>
            <person name="Chenal-Francisque V."/>
            <person name="Souza B."/>
            <person name="Dacheux D."/>
            <person name="Elliott J.M."/>
            <person name="Derbise A."/>
            <person name="Hauser L.J."/>
            <person name="Garcia E."/>
        </authorList>
    </citation>
    <scope>NUCLEOTIDE SEQUENCE [LARGE SCALE GENOMIC DNA]</scope>
    <source>
        <strain>IP32953</strain>
    </source>
</reference>
<organism>
    <name type="scientific">Yersinia pseudotuberculosis serotype I (strain IP32953)</name>
    <dbReference type="NCBI Taxonomy" id="273123"/>
    <lineage>
        <taxon>Bacteria</taxon>
        <taxon>Pseudomonadati</taxon>
        <taxon>Pseudomonadota</taxon>
        <taxon>Gammaproteobacteria</taxon>
        <taxon>Enterobacterales</taxon>
        <taxon>Yersiniaceae</taxon>
        <taxon>Yersinia</taxon>
    </lineage>
</organism>
<accession>Q663U8</accession>
<name>FDHD_YERPS</name>
<sequence>MSQIKPSRLSSSAEIRGARQLDVLQRHKLAEPQQDWLAEEVPVALVYNGISHVVMMATPKDLAAFALGFSLSEGIISSPQDIYAIEMTPGCNGIEVNIELSSRRFAGLKERRRAMAGRTGCGVCGIEQLDDIFRPITPLPFTQAFNLEHLDTALAQLKQVQPVGQLTGCTHAAAWINPEGELLGGCEDVGRHVALDKLLGIRAKQPWQQGAVLVSSRASYEMVQKTAMCGAEILFAVSAATTLAVEVAERCNLTLVGFSKPGRATVYTHPQRIK</sequence>
<evidence type="ECO:0000255" key="1">
    <source>
        <dbReference type="HAMAP-Rule" id="MF_00187"/>
    </source>
</evidence>
<protein>
    <recommendedName>
        <fullName evidence="1">Sulfur carrier protein FdhD</fullName>
    </recommendedName>
</protein>
<feature type="chain" id="PRO_0000152935" description="Sulfur carrier protein FdhD">
    <location>
        <begin position="1"/>
        <end position="274"/>
    </location>
</feature>
<feature type="active site" description="Cysteine persulfide intermediate" evidence="1">
    <location>
        <position position="121"/>
    </location>
</feature>
<feature type="binding site" evidence="1">
    <location>
        <begin position="258"/>
        <end position="263"/>
    </location>
    <ligand>
        <name>Mo-bis(molybdopterin guanine dinucleotide)</name>
        <dbReference type="ChEBI" id="CHEBI:60539"/>
    </ligand>
</feature>
<keyword id="KW-0963">Cytoplasm</keyword>
<keyword id="KW-0501">Molybdenum cofactor biosynthesis</keyword>
<comment type="function">
    <text evidence="1">Required for formate dehydrogenase (FDH) activity. Acts as a sulfur carrier protein that transfers sulfur from IscS to the molybdenum cofactor prior to its insertion into FDH.</text>
</comment>
<comment type="subcellular location">
    <subcellularLocation>
        <location evidence="1">Cytoplasm</location>
    </subcellularLocation>
</comment>
<comment type="similarity">
    <text evidence="1">Belongs to the FdhD family.</text>
</comment>
<proteinExistence type="inferred from homology"/>